<name>GS14_BACSU</name>
<accession>P80871</accession>
<feature type="chain" id="PRO_0000071632" description="General stress protein 14">
    <location>
        <begin position="1"/>
        <end position="175"/>
    </location>
</feature>
<keyword id="KW-0903">Direct protein sequencing</keyword>
<keyword id="KW-0560">Oxidoreductase</keyword>
<keyword id="KW-1185">Reference proteome</keyword>
<keyword id="KW-0346">Stress response</keyword>
<dbReference type="EC" id="1.6.99.-"/>
<dbReference type="EMBL" id="Z93767">
    <property type="protein sequence ID" value="CAB07787.1"/>
    <property type="molecule type" value="Genomic_DNA"/>
</dbReference>
<dbReference type="EMBL" id="AL009126">
    <property type="protein sequence ID" value="CAB15616.1"/>
    <property type="molecule type" value="Genomic_DNA"/>
</dbReference>
<dbReference type="PIR" id="C70069">
    <property type="entry name" value="C70069"/>
</dbReference>
<dbReference type="RefSeq" id="NP_391480.1">
    <property type="nucleotide sequence ID" value="NC_000964.3"/>
</dbReference>
<dbReference type="RefSeq" id="WP_003242788.1">
    <property type="nucleotide sequence ID" value="NZ_OZ025638.1"/>
</dbReference>
<dbReference type="SMR" id="P80871"/>
<dbReference type="FunCoup" id="P80871">
    <property type="interactions" value="8"/>
</dbReference>
<dbReference type="STRING" id="224308.BSU35990"/>
<dbReference type="jPOST" id="P80871"/>
<dbReference type="PaxDb" id="224308-BSU35990"/>
<dbReference type="EnsemblBacteria" id="CAB15616">
    <property type="protein sequence ID" value="CAB15616"/>
    <property type="gene ID" value="BSU_35990"/>
</dbReference>
<dbReference type="GeneID" id="936853"/>
<dbReference type="KEGG" id="bsu:BSU35990"/>
<dbReference type="PATRIC" id="fig|224308.179.peg.3896"/>
<dbReference type="eggNOG" id="COG2249">
    <property type="taxonomic scope" value="Bacteria"/>
</dbReference>
<dbReference type="InParanoid" id="P80871"/>
<dbReference type="OrthoDB" id="9798454at2"/>
<dbReference type="PhylomeDB" id="P80871"/>
<dbReference type="BioCyc" id="BSUB:BSU35990-MONOMER"/>
<dbReference type="Proteomes" id="UP000001570">
    <property type="component" value="Chromosome"/>
</dbReference>
<dbReference type="GO" id="GO:0009055">
    <property type="term" value="F:electron transfer activity"/>
    <property type="evidence" value="ECO:0000318"/>
    <property type="project" value="GO_Central"/>
</dbReference>
<dbReference type="GO" id="GO:0010181">
    <property type="term" value="F:FMN binding"/>
    <property type="evidence" value="ECO:0000318"/>
    <property type="project" value="GO_Central"/>
</dbReference>
<dbReference type="GO" id="GO:0003955">
    <property type="term" value="F:NAD(P)H dehydrogenase (quinone) activity"/>
    <property type="evidence" value="ECO:0000318"/>
    <property type="project" value="GO_Central"/>
</dbReference>
<dbReference type="FunFam" id="3.40.50.360:FF:000013">
    <property type="entry name" value="Glutathione-regulated potassium-efflux system ancillary protein KefG"/>
    <property type="match status" value="1"/>
</dbReference>
<dbReference type="Gene3D" id="3.40.50.360">
    <property type="match status" value="1"/>
</dbReference>
<dbReference type="InterPro" id="IPR003680">
    <property type="entry name" value="Flavodoxin_fold"/>
</dbReference>
<dbReference type="InterPro" id="IPR029039">
    <property type="entry name" value="Flavoprotein-like_sf"/>
</dbReference>
<dbReference type="InterPro" id="IPR046980">
    <property type="entry name" value="KefG/KefF"/>
</dbReference>
<dbReference type="PANTHER" id="PTHR47307">
    <property type="entry name" value="GLUTATHIONE-REGULATED POTASSIUM-EFFLUX SYSTEM ANCILLARY PROTEIN KEFG"/>
    <property type="match status" value="1"/>
</dbReference>
<dbReference type="PANTHER" id="PTHR47307:SF1">
    <property type="entry name" value="GLUTATHIONE-REGULATED POTASSIUM-EFFLUX SYSTEM ANCILLARY PROTEIN KEFG"/>
    <property type="match status" value="1"/>
</dbReference>
<dbReference type="Pfam" id="PF02525">
    <property type="entry name" value="Flavodoxin_2"/>
    <property type="match status" value="1"/>
</dbReference>
<dbReference type="SUPFAM" id="SSF52218">
    <property type="entry name" value="Flavoproteins"/>
    <property type="match status" value="1"/>
</dbReference>
<comment type="induction">
    <text>By heat shock, salt stress, oxidative stress, glucose limitation and oxygen limitation.</text>
</comment>
<comment type="similarity">
    <text evidence="1">Belongs to the NAD(P)H dehydrogenase (quinone) family.</text>
</comment>
<gene>
    <name type="primary">ywrO</name>
    <name type="ordered locus">BSU35990</name>
</gene>
<protein>
    <recommendedName>
        <fullName>General stress protein 14</fullName>
        <shortName>GSP14</shortName>
        <ecNumber>1.6.99.-</ecNumber>
    </recommendedName>
</protein>
<reference key="1">
    <citation type="journal article" date="1997" name="Microbiology">
        <title>The Bacillus subtilis genome from gerBC (311 degrees) to licR (334 degrees).</title>
        <authorList>
            <person name="Presecan E."/>
            <person name="Moszer I."/>
            <person name="Boursier L."/>
            <person name="Cruz Ramos H."/>
            <person name="De La Fuente V."/>
            <person name="Hullo M.-F."/>
            <person name="Lelong C."/>
            <person name="Schleich S."/>
            <person name="Sekowska A."/>
            <person name="Song B.H."/>
            <person name="Villani G."/>
            <person name="Kunst F."/>
            <person name="Danchin A."/>
            <person name="Glaser P."/>
        </authorList>
    </citation>
    <scope>NUCLEOTIDE SEQUENCE [GENOMIC DNA]</scope>
    <source>
        <strain>168</strain>
    </source>
</reference>
<reference key="2">
    <citation type="journal article" date="1997" name="Nature">
        <title>The complete genome sequence of the Gram-positive bacterium Bacillus subtilis.</title>
        <authorList>
            <person name="Kunst F."/>
            <person name="Ogasawara N."/>
            <person name="Moszer I."/>
            <person name="Albertini A.M."/>
            <person name="Alloni G."/>
            <person name="Azevedo V."/>
            <person name="Bertero M.G."/>
            <person name="Bessieres P."/>
            <person name="Bolotin A."/>
            <person name="Borchert S."/>
            <person name="Borriss R."/>
            <person name="Boursier L."/>
            <person name="Brans A."/>
            <person name="Braun M."/>
            <person name="Brignell S.C."/>
            <person name="Bron S."/>
            <person name="Brouillet S."/>
            <person name="Bruschi C.V."/>
            <person name="Caldwell B."/>
            <person name="Capuano V."/>
            <person name="Carter N.M."/>
            <person name="Choi S.-K."/>
            <person name="Codani J.-J."/>
            <person name="Connerton I.F."/>
            <person name="Cummings N.J."/>
            <person name="Daniel R.A."/>
            <person name="Denizot F."/>
            <person name="Devine K.M."/>
            <person name="Duesterhoeft A."/>
            <person name="Ehrlich S.D."/>
            <person name="Emmerson P.T."/>
            <person name="Entian K.-D."/>
            <person name="Errington J."/>
            <person name="Fabret C."/>
            <person name="Ferrari E."/>
            <person name="Foulger D."/>
            <person name="Fritz C."/>
            <person name="Fujita M."/>
            <person name="Fujita Y."/>
            <person name="Fuma S."/>
            <person name="Galizzi A."/>
            <person name="Galleron N."/>
            <person name="Ghim S.-Y."/>
            <person name="Glaser P."/>
            <person name="Goffeau A."/>
            <person name="Golightly E.J."/>
            <person name="Grandi G."/>
            <person name="Guiseppi G."/>
            <person name="Guy B.J."/>
            <person name="Haga K."/>
            <person name="Haiech J."/>
            <person name="Harwood C.R."/>
            <person name="Henaut A."/>
            <person name="Hilbert H."/>
            <person name="Holsappel S."/>
            <person name="Hosono S."/>
            <person name="Hullo M.-F."/>
            <person name="Itaya M."/>
            <person name="Jones L.-M."/>
            <person name="Joris B."/>
            <person name="Karamata D."/>
            <person name="Kasahara Y."/>
            <person name="Klaerr-Blanchard M."/>
            <person name="Klein C."/>
            <person name="Kobayashi Y."/>
            <person name="Koetter P."/>
            <person name="Koningstein G."/>
            <person name="Krogh S."/>
            <person name="Kumano M."/>
            <person name="Kurita K."/>
            <person name="Lapidus A."/>
            <person name="Lardinois S."/>
            <person name="Lauber J."/>
            <person name="Lazarevic V."/>
            <person name="Lee S.-M."/>
            <person name="Levine A."/>
            <person name="Liu H."/>
            <person name="Masuda S."/>
            <person name="Mauel C."/>
            <person name="Medigue C."/>
            <person name="Medina N."/>
            <person name="Mellado R.P."/>
            <person name="Mizuno M."/>
            <person name="Moestl D."/>
            <person name="Nakai S."/>
            <person name="Noback M."/>
            <person name="Noone D."/>
            <person name="O'Reilly M."/>
            <person name="Ogawa K."/>
            <person name="Ogiwara A."/>
            <person name="Oudega B."/>
            <person name="Park S.-H."/>
            <person name="Parro V."/>
            <person name="Pohl T.M."/>
            <person name="Portetelle D."/>
            <person name="Porwollik S."/>
            <person name="Prescott A.M."/>
            <person name="Presecan E."/>
            <person name="Pujic P."/>
            <person name="Purnelle B."/>
            <person name="Rapoport G."/>
            <person name="Rey M."/>
            <person name="Reynolds S."/>
            <person name="Rieger M."/>
            <person name="Rivolta C."/>
            <person name="Rocha E."/>
            <person name="Roche B."/>
            <person name="Rose M."/>
            <person name="Sadaie Y."/>
            <person name="Sato T."/>
            <person name="Scanlan E."/>
            <person name="Schleich S."/>
            <person name="Schroeter R."/>
            <person name="Scoffone F."/>
            <person name="Sekiguchi J."/>
            <person name="Sekowska A."/>
            <person name="Seror S.J."/>
            <person name="Serror P."/>
            <person name="Shin B.-S."/>
            <person name="Soldo B."/>
            <person name="Sorokin A."/>
            <person name="Tacconi E."/>
            <person name="Takagi T."/>
            <person name="Takahashi H."/>
            <person name="Takemaru K."/>
            <person name="Takeuchi M."/>
            <person name="Tamakoshi A."/>
            <person name="Tanaka T."/>
            <person name="Terpstra P."/>
            <person name="Tognoni A."/>
            <person name="Tosato V."/>
            <person name="Uchiyama S."/>
            <person name="Vandenbol M."/>
            <person name="Vannier F."/>
            <person name="Vassarotti A."/>
            <person name="Viari A."/>
            <person name="Wambutt R."/>
            <person name="Wedler E."/>
            <person name="Wedler H."/>
            <person name="Weitzenegger T."/>
            <person name="Winters P."/>
            <person name="Wipat A."/>
            <person name="Yamamoto H."/>
            <person name="Yamane K."/>
            <person name="Yasumoto K."/>
            <person name="Yata K."/>
            <person name="Yoshida K."/>
            <person name="Yoshikawa H.-F."/>
            <person name="Zumstein E."/>
            <person name="Yoshikawa H."/>
            <person name="Danchin A."/>
        </authorList>
    </citation>
    <scope>NUCLEOTIDE SEQUENCE [LARGE SCALE GENOMIC DNA]</scope>
    <source>
        <strain>168</strain>
    </source>
</reference>
<reference key="3">
    <citation type="journal article" date="1997" name="Electrophoresis">
        <title>First steps from a two-dimensional protein index towards a response-regulation map for Bacillus subtilis.</title>
        <authorList>
            <person name="Antelmann H."/>
            <person name="Bernhardt J."/>
            <person name="Schmid R."/>
            <person name="Mach H."/>
            <person name="Voelker U."/>
            <person name="Hecker M."/>
        </authorList>
    </citation>
    <scope>PROTEIN SEQUENCE OF 1-10</scope>
    <source>
        <strain>168 / IS58</strain>
    </source>
</reference>
<proteinExistence type="evidence at protein level"/>
<organism>
    <name type="scientific">Bacillus subtilis (strain 168)</name>
    <dbReference type="NCBI Taxonomy" id="224308"/>
    <lineage>
        <taxon>Bacteria</taxon>
        <taxon>Bacillati</taxon>
        <taxon>Bacillota</taxon>
        <taxon>Bacilli</taxon>
        <taxon>Bacillales</taxon>
        <taxon>Bacillaceae</taxon>
        <taxon>Bacillus</taxon>
    </lineage>
</organism>
<evidence type="ECO:0000305" key="1"/>
<sequence length="175" mass="19955">MKILVLAVHPHMETSVVNKAWAEELSKHDNITVRDLYKEYPDEAIDVAKEQQLCEEYDRIVFQFPLYWYSSPPLLKKWQDLVLTYGWAFGSEGNALHGKELMLAVSTGSEAEKYQAGGANHYSISELLKPFQATSNLIGMKYLPPYVFYGVNYAAAEDISHSAKRLAEYIQQPFV</sequence>